<organism>
    <name type="scientific">Salinibacter ruber (strain DSM 13855 / M31)</name>
    <dbReference type="NCBI Taxonomy" id="309807"/>
    <lineage>
        <taxon>Bacteria</taxon>
        <taxon>Pseudomonadati</taxon>
        <taxon>Rhodothermota</taxon>
        <taxon>Rhodothermia</taxon>
        <taxon>Rhodothermales</taxon>
        <taxon>Salinibacteraceae</taxon>
        <taxon>Salinibacter</taxon>
    </lineage>
</organism>
<proteinExistence type="inferred from homology"/>
<keyword id="KW-0028">Amino-acid biosynthesis</keyword>
<keyword id="KW-0057">Aromatic amino acid biosynthesis</keyword>
<keyword id="KW-0210">Decarboxylase</keyword>
<keyword id="KW-0456">Lyase</keyword>
<keyword id="KW-1185">Reference proteome</keyword>
<keyword id="KW-0822">Tryptophan biosynthesis</keyword>
<gene>
    <name evidence="1" type="primary">trpC</name>
    <name type="ordered locus">SRU_1667</name>
</gene>
<name>TRPC_SALRD</name>
<protein>
    <recommendedName>
        <fullName evidence="1">Indole-3-glycerol phosphate synthase</fullName>
        <shortName evidence="1">IGPS</shortName>
        <ecNumber evidence="1">4.1.1.48</ecNumber>
    </recommendedName>
</protein>
<feature type="chain" id="PRO_1000198786" description="Indole-3-glycerol phosphate synthase">
    <location>
        <begin position="1"/>
        <end position="270"/>
    </location>
</feature>
<evidence type="ECO:0000255" key="1">
    <source>
        <dbReference type="HAMAP-Rule" id="MF_00134"/>
    </source>
</evidence>
<sequence length="270" mass="29779">MSILDDIIDDTRELVEQRKQETPTSELKERPFYDEREPLSLAEALKERGLSFIAEVKKASPSKGVIRDPFDPAAIAQQYAEHDAAAISVLTEPLHFEGALEHMAWIRAHVPETPLLRKDFIIDPYQLVEARAVGADAVLLIATALDPGQLAELHAAATELGLSCLVEVYEEEDLDKIDWEQVSVLGVNNRDLHTFEVDLDNSLRIFDQTPKGVGRVAESGLSDPETLVRLRKAGVNGVLIGEHLMRAEHPGEALSRLRAEGKKIAAQQAG</sequence>
<accession>Q2S1Z5</accession>
<comment type="catalytic activity">
    <reaction evidence="1">
        <text>1-(2-carboxyphenylamino)-1-deoxy-D-ribulose 5-phosphate + H(+) = (1S,2R)-1-C-(indol-3-yl)glycerol 3-phosphate + CO2 + H2O</text>
        <dbReference type="Rhea" id="RHEA:23476"/>
        <dbReference type="ChEBI" id="CHEBI:15377"/>
        <dbReference type="ChEBI" id="CHEBI:15378"/>
        <dbReference type="ChEBI" id="CHEBI:16526"/>
        <dbReference type="ChEBI" id="CHEBI:58613"/>
        <dbReference type="ChEBI" id="CHEBI:58866"/>
        <dbReference type="EC" id="4.1.1.48"/>
    </reaction>
</comment>
<comment type="pathway">
    <text evidence="1">Amino-acid biosynthesis; L-tryptophan biosynthesis; L-tryptophan from chorismate: step 4/5.</text>
</comment>
<comment type="similarity">
    <text evidence="1">Belongs to the TrpC family.</text>
</comment>
<reference key="1">
    <citation type="journal article" date="2005" name="Proc. Natl. Acad. Sci. U.S.A.">
        <title>The genome of Salinibacter ruber: convergence and gene exchange among hyperhalophilic bacteria and archaea.</title>
        <authorList>
            <person name="Mongodin E.F."/>
            <person name="Nelson K.E."/>
            <person name="Daugherty S."/>
            <person name="DeBoy R.T."/>
            <person name="Wister J."/>
            <person name="Khouri H."/>
            <person name="Weidman J."/>
            <person name="Walsh D.A."/>
            <person name="Papke R.T."/>
            <person name="Sanchez Perez G."/>
            <person name="Sharma A.K."/>
            <person name="Nesbo C.L."/>
            <person name="MacLeod D."/>
            <person name="Bapteste E."/>
            <person name="Doolittle W.F."/>
            <person name="Charlebois R.L."/>
            <person name="Legault B."/>
            <person name="Rodriguez-Valera F."/>
        </authorList>
    </citation>
    <scope>NUCLEOTIDE SEQUENCE [LARGE SCALE GENOMIC DNA]</scope>
    <source>
        <strain>DSM 13855 / CECT 5946 / M31</strain>
    </source>
</reference>
<dbReference type="EC" id="4.1.1.48" evidence="1"/>
<dbReference type="EMBL" id="CP000159">
    <property type="protein sequence ID" value="ABC44256.1"/>
    <property type="molecule type" value="Genomic_DNA"/>
</dbReference>
<dbReference type="RefSeq" id="WP_011404412.1">
    <property type="nucleotide sequence ID" value="NC_007677.1"/>
</dbReference>
<dbReference type="RefSeq" id="YP_445786.1">
    <property type="nucleotide sequence ID" value="NC_007677.1"/>
</dbReference>
<dbReference type="SMR" id="Q2S1Z5"/>
<dbReference type="STRING" id="309807.SRU_1667"/>
<dbReference type="EnsemblBacteria" id="ABC44256">
    <property type="protein sequence ID" value="ABC44256"/>
    <property type="gene ID" value="SRU_1667"/>
</dbReference>
<dbReference type="GeneID" id="83728586"/>
<dbReference type="KEGG" id="sru:SRU_1667"/>
<dbReference type="PATRIC" id="fig|309807.25.peg.1729"/>
<dbReference type="eggNOG" id="COG0134">
    <property type="taxonomic scope" value="Bacteria"/>
</dbReference>
<dbReference type="HOGENOM" id="CLU_034247_2_0_10"/>
<dbReference type="OrthoDB" id="9804217at2"/>
<dbReference type="UniPathway" id="UPA00035">
    <property type="reaction ID" value="UER00043"/>
</dbReference>
<dbReference type="Proteomes" id="UP000008674">
    <property type="component" value="Chromosome"/>
</dbReference>
<dbReference type="GO" id="GO:0004425">
    <property type="term" value="F:indole-3-glycerol-phosphate synthase activity"/>
    <property type="evidence" value="ECO:0007669"/>
    <property type="project" value="UniProtKB-UniRule"/>
</dbReference>
<dbReference type="GO" id="GO:0004640">
    <property type="term" value="F:phosphoribosylanthranilate isomerase activity"/>
    <property type="evidence" value="ECO:0007669"/>
    <property type="project" value="TreeGrafter"/>
</dbReference>
<dbReference type="GO" id="GO:0000162">
    <property type="term" value="P:L-tryptophan biosynthetic process"/>
    <property type="evidence" value="ECO:0007669"/>
    <property type="project" value="UniProtKB-UniRule"/>
</dbReference>
<dbReference type="CDD" id="cd00331">
    <property type="entry name" value="IGPS"/>
    <property type="match status" value="1"/>
</dbReference>
<dbReference type="FunFam" id="3.20.20.70:FF:000024">
    <property type="entry name" value="Indole-3-glycerol phosphate synthase"/>
    <property type="match status" value="1"/>
</dbReference>
<dbReference type="Gene3D" id="3.20.20.70">
    <property type="entry name" value="Aldolase class I"/>
    <property type="match status" value="1"/>
</dbReference>
<dbReference type="HAMAP" id="MF_00134_B">
    <property type="entry name" value="IGPS_B"/>
    <property type="match status" value="1"/>
</dbReference>
<dbReference type="InterPro" id="IPR013785">
    <property type="entry name" value="Aldolase_TIM"/>
</dbReference>
<dbReference type="InterPro" id="IPR045186">
    <property type="entry name" value="Indole-3-glycerol_P_synth"/>
</dbReference>
<dbReference type="InterPro" id="IPR013798">
    <property type="entry name" value="Indole-3-glycerol_P_synth_dom"/>
</dbReference>
<dbReference type="InterPro" id="IPR001468">
    <property type="entry name" value="Indole-3-GlycerolPSynthase_CS"/>
</dbReference>
<dbReference type="InterPro" id="IPR011060">
    <property type="entry name" value="RibuloseP-bd_barrel"/>
</dbReference>
<dbReference type="NCBIfam" id="NF001377">
    <property type="entry name" value="PRK00278.2-4"/>
    <property type="match status" value="1"/>
</dbReference>
<dbReference type="PANTHER" id="PTHR22854:SF2">
    <property type="entry name" value="INDOLE-3-GLYCEROL-PHOSPHATE SYNTHASE"/>
    <property type="match status" value="1"/>
</dbReference>
<dbReference type="PANTHER" id="PTHR22854">
    <property type="entry name" value="TRYPTOPHAN BIOSYNTHESIS PROTEIN"/>
    <property type="match status" value="1"/>
</dbReference>
<dbReference type="Pfam" id="PF00218">
    <property type="entry name" value="IGPS"/>
    <property type="match status" value="1"/>
</dbReference>
<dbReference type="SUPFAM" id="SSF51366">
    <property type="entry name" value="Ribulose-phoshate binding barrel"/>
    <property type="match status" value="1"/>
</dbReference>
<dbReference type="PROSITE" id="PS00614">
    <property type="entry name" value="IGPS"/>
    <property type="match status" value="1"/>
</dbReference>